<protein>
    <recommendedName>
        <fullName evidence="2">Large ribosomal subunit protein uL22c</fullName>
    </recommendedName>
    <alternativeName>
        <fullName>50S ribosomal protein L22, chloroplastic</fullName>
    </alternativeName>
</protein>
<organism>
    <name type="scientific">Jasminum nudiflorum</name>
    <name type="common">Winter jasmine</name>
    <dbReference type="NCBI Taxonomy" id="126431"/>
    <lineage>
        <taxon>Eukaryota</taxon>
        <taxon>Viridiplantae</taxon>
        <taxon>Streptophyta</taxon>
        <taxon>Embryophyta</taxon>
        <taxon>Tracheophyta</taxon>
        <taxon>Spermatophyta</taxon>
        <taxon>Magnoliopsida</taxon>
        <taxon>eudicotyledons</taxon>
        <taxon>Gunneridae</taxon>
        <taxon>Pentapetalae</taxon>
        <taxon>asterids</taxon>
        <taxon>lamiids</taxon>
        <taxon>Lamiales</taxon>
        <taxon>Oleaceae</taxon>
        <taxon>Jasmineae</taxon>
        <taxon>Jasminum</taxon>
    </lineage>
</organism>
<evidence type="ECO:0000250" key="1"/>
<evidence type="ECO:0000305" key="2"/>
<sequence length="154" mass="17925">MRKKKTEVYALRRHISLSADKARRVIDQIRGRSYEETLMILELMPYRACSPISKLVYSAAANANSNMGSNKANLVISNAEVNEGTTRKKFKPRARGHCYPIKRRTCHITIGVKDISLDDEYEQIYSLKKPRWKNKYTTMIYHDIDSIGRVWDKK</sequence>
<comment type="function">
    <text evidence="1">This protein binds specifically to 23S rRNA.</text>
</comment>
<comment type="function">
    <text evidence="1">The globular domain of the protein is located near the polypeptide exit tunnel on the outside of the subunit, while an extended beta-hairpin is found that lines the wall of the exit tunnel in the center of the 70S ribosome.</text>
</comment>
<comment type="subunit">
    <text evidence="1">Part of the 50S ribosomal subunit.</text>
</comment>
<comment type="subcellular location">
    <subcellularLocation>
        <location>Plastid</location>
        <location>Chloroplast</location>
    </subcellularLocation>
</comment>
<comment type="similarity">
    <text evidence="2">Belongs to the universal ribosomal protein uL22 family.</text>
</comment>
<reference key="1">
    <citation type="journal article" date="2007" name="Mol. Biol. Evol.">
        <title>Gene relocations within chloroplast genomes of Jasminum and Menodora (Oleaceae) are due to multiple, overlapping inversions.</title>
        <authorList>
            <person name="Lee H.-L."/>
            <person name="Jansen R.K."/>
            <person name="Chumley T.W."/>
            <person name="Kim K.-J."/>
        </authorList>
    </citation>
    <scope>NUCLEOTIDE SEQUENCE [LARGE SCALE GENOMIC DNA]</scope>
</reference>
<dbReference type="EMBL" id="DQ673255">
    <property type="protein sequence ID" value="ABG74666.1"/>
    <property type="molecule type" value="Genomic_DNA"/>
</dbReference>
<dbReference type="RefSeq" id="YP_778529.1">
    <property type="nucleotide sequence ID" value="NC_008407.1"/>
</dbReference>
<dbReference type="SMR" id="Q06R92"/>
<dbReference type="GeneID" id="4319794"/>
<dbReference type="GO" id="GO:0009507">
    <property type="term" value="C:chloroplast"/>
    <property type="evidence" value="ECO:0007669"/>
    <property type="project" value="UniProtKB-SubCell"/>
</dbReference>
<dbReference type="GO" id="GO:0015934">
    <property type="term" value="C:large ribosomal subunit"/>
    <property type="evidence" value="ECO:0007669"/>
    <property type="project" value="InterPro"/>
</dbReference>
<dbReference type="GO" id="GO:0019843">
    <property type="term" value="F:rRNA binding"/>
    <property type="evidence" value="ECO:0007669"/>
    <property type="project" value="UniProtKB-UniRule"/>
</dbReference>
<dbReference type="GO" id="GO:0003735">
    <property type="term" value="F:structural constituent of ribosome"/>
    <property type="evidence" value="ECO:0007669"/>
    <property type="project" value="InterPro"/>
</dbReference>
<dbReference type="GO" id="GO:0006412">
    <property type="term" value="P:translation"/>
    <property type="evidence" value="ECO:0007669"/>
    <property type="project" value="UniProtKB-UniRule"/>
</dbReference>
<dbReference type="CDD" id="cd00336">
    <property type="entry name" value="Ribosomal_L22"/>
    <property type="match status" value="1"/>
</dbReference>
<dbReference type="FunFam" id="3.90.470.10:FF:000006">
    <property type="entry name" value="50S ribosomal protein L22, chloroplastic"/>
    <property type="match status" value="1"/>
</dbReference>
<dbReference type="Gene3D" id="3.90.470.10">
    <property type="entry name" value="Ribosomal protein L22/L17"/>
    <property type="match status" value="1"/>
</dbReference>
<dbReference type="HAMAP" id="MF_01331_B">
    <property type="entry name" value="Ribosomal_uL22_B"/>
    <property type="match status" value="1"/>
</dbReference>
<dbReference type="InterPro" id="IPR001063">
    <property type="entry name" value="Ribosomal_uL22"/>
</dbReference>
<dbReference type="InterPro" id="IPR005727">
    <property type="entry name" value="Ribosomal_uL22_bac/chlpt-type"/>
</dbReference>
<dbReference type="InterPro" id="IPR047867">
    <property type="entry name" value="Ribosomal_uL22_bac/org-type"/>
</dbReference>
<dbReference type="InterPro" id="IPR036394">
    <property type="entry name" value="Ribosomal_uL22_sf"/>
</dbReference>
<dbReference type="NCBIfam" id="TIGR01044">
    <property type="entry name" value="rplV_bact"/>
    <property type="match status" value="1"/>
</dbReference>
<dbReference type="PANTHER" id="PTHR13501">
    <property type="entry name" value="CHLOROPLAST 50S RIBOSOMAL PROTEIN L22-RELATED"/>
    <property type="match status" value="1"/>
</dbReference>
<dbReference type="PANTHER" id="PTHR13501:SF10">
    <property type="entry name" value="LARGE RIBOSOMAL SUBUNIT PROTEIN UL22M"/>
    <property type="match status" value="1"/>
</dbReference>
<dbReference type="Pfam" id="PF00237">
    <property type="entry name" value="Ribosomal_L22"/>
    <property type="match status" value="1"/>
</dbReference>
<dbReference type="SUPFAM" id="SSF54843">
    <property type="entry name" value="Ribosomal protein L22"/>
    <property type="match status" value="1"/>
</dbReference>
<feature type="chain" id="PRO_0000276446" description="Large ribosomal subunit protein uL22c">
    <location>
        <begin position="1"/>
        <end position="154"/>
    </location>
</feature>
<accession>Q06R92</accession>
<keyword id="KW-0150">Chloroplast</keyword>
<keyword id="KW-0934">Plastid</keyword>
<keyword id="KW-0687">Ribonucleoprotein</keyword>
<keyword id="KW-0689">Ribosomal protein</keyword>
<keyword id="KW-0694">RNA-binding</keyword>
<keyword id="KW-0699">rRNA-binding</keyword>
<gene>
    <name type="primary">rpl22</name>
    <name type="ORF">JNC0919</name>
</gene>
<proteinExistence type="inferred from homology"/>
<geneLocation type="chloroplast"/>
<name>RK22_JASNU</name>